<reference key="1">
    <citation type="journal article" date="1999" name="Trends Plant Sci.">
        <title>A guide to the Lhc genes and their relatives in Arabidopsis.</title>
        <authorList>
            <person name="Jansson S."/>
        </authorList>
    </citation>
    <scope>NUCLEOTIDE SEQUENCE [MRNA]</scope>
    <scope>GENE FAMILY</scope>
    <scope>NOMENCLATURE</scope>
</reference>
<reference key="2">
    <citation type="journal article" date="2000" name="Nature">
        <title>Sequence and analysis of chromosome 1 of the plant Arabidopsis thaliana.</title>
        <authorList>
            <person name="Theologis A."/>
            <person name="Ecker J.R."/>
            <person name="Palm C.J."/>
            <person name="Federspiel N.A."/>
            <person name="Kaul S."/>
            <person name="White O."/>
            <person name="Alonso J."/>
            <person name="Altafi H."/>
            <person name="Araujo R."/>
            <person name="Bowman C.L."/>
            <person name="Brooks S.Y."/>
            <person name="Buehler E."/>
            <person name="Chan A."/>
            <person name="Chao Q."/>
            <person name="Chen H."/>
            <person name="Cheuk R.F."/>
            <person name="Chin C.W."/>
            <person name="Chung M.K."/>
            <person name="Conn L."/>
            <person name="Conway A.B."/>
            <person name="Conway A.R."/>
            <person name="Creasy T.H."/>
            <person name="Dewar K."/>
            <person name="Dunn P."/>
            <person name="Etgu P."/>
            <person name="Feldblyum T.V."/>
            <person name="Feng J.-D."/>
            <person name="Fong B."/>
            <person name="Fujii C.Y."/>
            <person name="Gill J.E."/>
            <person name="Goldsmith A.D."/>
            <person name="Haas B."/>
            <person name="Hansen N.F."/>
            <person name="Hughes B."/>
            <person name="Huizar L."/>
            <person name="Hunter J.L."/>
            <person name="Jenkins J."/>
            <person name="Johnson-Hopson C."/>
            <person name="Khan S."/>
            <person name="Khaykin E."/>
            <person name="Kim C.J."/>
            <person name="Koo H.L."/>
            <person name="Kremenetskaia I."/>
            <person name="Kurtz D.B."/>
            <person name="Kwan A."/>
            <person name="Lam B."/>
            <person name="Langin-Hooper S."/>
            <person name="Lee A."/>
            <person name="Lee J.M."/>
            <person name="Lenz C.A."/>
            <person name="Li J.H."/>
            <person name="Li Y.-P."/>
            <person name="Lin X."/>
            <person name="Liu S.X."/>
            <person name="Liu Z.A."/>
            <person name="Luros J.S."/>
            <person name="Maiti R."/>
            <person name="Marziali A."/>
            <person name="Militscher J."/>
            <person name="Miranda M."/>
            <person name="Nguyen M."/>
            <person name="Nierman W.C."/>
            <person name="Osborne B.I."/>
            <person name="Pai G."/>
            <person name="Peterson J."/>
            <person name="Pham P.K."/>
            <person name="Rizzo M."/>
            <person name="Rooney T."/>
            <person name="Rowley D."/>
            <person name="Sakano H."/>
            <person name="Salzberg S.L."/>
            <person name="Schwartz J.R."/>
            <person name="Shinn P."/>
            <person name="Southwick A.M."/>
            <person name="Sun H."/>
            <person name="Tallon L.J."/>
            <person name="Tambunga G."/>
            <person name="Toriumi M.J."/>
            <person name="Town C.D."/>
            <person name="Utterback T."/>
            <person name="Van Aken S."/>
            <person name="Vaysberg M."/>
            <person name="Vysotskaia V.S."/>
            <person name="Walker M."/>
            <person name="Wu D."/>
            <person name="Yu G."/>
            <person name="Fraser C.M."/>
            <person name="Venter J.C."/>
            <person name="Davis R.W."/>
        </authorList>
    </citation>
    <scope>NUCLEOTIDE SEQUENCE [LARGE SCALE GENOMIC DNA]</scope>
    <source>
        <strain>cv. Columbia</strain>
    </source>
</reference>
<reference key="3">
    <citation type="journal article" date="2017" name="Plant J.">
        <title>Araport11: a complete reannotation of the Arabidopsis thaliana reference genome.</title>
        <authorList>
            <person name="Cheng C.Y."/>
            <person name="Krishnakumar V."/>
            <person name="Chan A.P."/>
            <person name="Thibaud-Nissen F."/>
            <person name="Schobel S."/>
            <person name="Town C.D."/>
        </authorList>
    </citation>
    <scope>GENOME REANNOTATION</scope>
    <source>
        <strain>cv. Columbia</strain>
    </source>
</reference>
<reference key="4">
    <citation type="journal article" date="2003" name="Science">
        <title>Empirical analysis of transcriptional activity in the Arabidopsis genome.</title>
        <authorList>
            <person name="Yamada K."/>
            <person name="Lim J."/>
            <person name="Dale J.M."/>
            <person name="Chen H."/>
            <person name="Shinn P."/>
            <person name="Palm C.J."/>
            <person name="Southwick A.M."/>
            <person name="Wu H.C."/>
            <person name="Kim C.J."/>
            <person name="Nguyen M."/>
            <person name="Pham P.K."/>
            <person name="Cheuk R.F."/>
            <person name="Karlin-Newmann G."/>
            <person name="Liu S.X."/>
            <person name="Lam B."/>
            <person name="Sakano H."/>
            <person name="Wu T."/>
            <person name="Yu G."/>
            <person name="Miranda M."/>
            <person name="Quach H.L."/>
            <person name="Tripp M."/>
            <person name="Chang C.H."/>
            <person name="Lee J.M."/>
            <person name="Toriumi M.J."/>
            <person name="Chan M.M."/>
            <person name="Tang C.C."/>
            <person name="Onodera C.S."/>
            <person name="Deng J.M."/>
            <person name="Akiyama K."/>
            <person name="Ansari Y."/>
            <person name="Arakawa T."/>
            <person name="Banh J."/>
            <person name="Banno F."/>
            <person name="Bowser L."/>
            <person name="Brooks S.Y."/>
            <person name="Carninci P."/>
            <person name="Chao Q."/>
            <person name="Choy N."/>
            <person name="Enju A."/>
            <person name="Goldsmith A.D."/>
            <person name="Gurjal M."/>
            <person name="Hansen N.F."/>
            <person name="Hayashizaki Y."/>
            <person name="Johnson-Hopson C."/>
            <person name="Hsuan V.W."/>
            <person name="Iida K."/>
            <person name="Karnes M."/>
            <person name="Khan S."/>
            <person name="Koesema E."/>
            <person name="Ishida J."/>
            <person name="Jiang P.X."/>
            <person name="Jones T."/>
            <person name="Kawai J."/>
            <person name="Kamiya A."/>
            <person name="Meyers C."/>
            <person name="Nakajima M."/>
            <person name="Narusaka M."/>
            <person name="Seki M."/>
            <person name="Sakurai T."/>
            <person name="Satou M."/>
            <person name="Tamse R."/>
            <person name="Vaysberg M."/>
            <person name="Wallender E.K."/>
            <person name="Wong C."/>
            <person name="Yamamura Y."/>
            <person name="Yuan S."/>
            <person name="Shinozaki K."/>
            <person name="Davis R.W."/>
            <person name="Theologis A."/>
            <person name="Ecker J.R."/>
        </authorList>
    </citation>
    <scope>NUCLEOTIDE SEQUENCE [LARGE SCALE MRNA]</scope>
    <source>
        <strain>cv. Columbia</strain>
    </source>
</reference>
<reference key="5">
    <citation type="submission" date="2005-03" db="EMBL/GenBank/DDBJ databases">
        <title>Large-scale analysis of RIKEN Arabidopsis full-length (RAFL) cDNAs.</title>
        <authorList>
            <person name="Totoki Y."/>
            <person name="Seki M."/>
            <person name="Ishida J."/>
            <person name="Nakajima M."/>
            <person name="Enju A."/>
            <person name="Kamiya A."/>
            <person name="Narusaka M."/>
            <person name="Shin-i T."/>
            <person name="Nakagawa M."/>
            <person name="Sakamoto N."/>
            <person name="Oishi K."/>
            <person name="Kohara Y."/>
            <person name="Kobayashi M."/>
            <person name="Toyoda A."/>
            <person name="Sakaki Y."/>
            <person name="Sakurai T."/>
            <person name="Iida K."/>
            <person name="Akiyama K."/>
            <person name="Satou M."/>
            <person name="Toyoda T."/>
            <person name="Konagaya A."/>
            <person name="Carninci P."/>
            <person name="Kawai J."/>
            <person name="Hayashizaki Y."/>
            <person name="Shinozaki K."/>
        </authorList>
    </citation>
    <scope>NUCLEOTIDE SEQUENCE [LARGE SCALE MRNA]</scope>
    <source>
        <strain>cv. Columbia</strain>
    </source>
</reference>
<reference key="6">
    <citation type="submission" date="2002-03" db="EMBL/GenBank/DDBJ databases">
        <title>Full-length cDNA from Arabidopsis thaliana.</title>
        <authorList>
            <person name="Brover V.V."/>
            <person name="Troukhan M.E."/>
            <person name="Alexandrov N.A."/>
            <person name="Lu Y.-P."/>
            <person name="Flavell R.B."/>
            <person name="Feldmann K.A."/>
        </authorList>
    </citation>
    <scope>NUCLEOTIDE SEQUENCE [LARGE SCALE MRNA]</scope>
</reference>
<reference key="7">
    <citation type="journal article" date="2009" name="DNA Res.">
        <title>Analysis of multiple occurrences of alternative splicing events in Arabidopsis thaliana using novel sequenced full-length cDNAs.</title>
        <authorList>
            <person name="Iida K."/>
            <person name="Fukami-Kobayashi K."/>
            <person name="Toyoda A."/>
            <person name="Sakaki Y."/>
            <person name="Kobayashi M."/>
            <person name="Seki M."/>
            <person name="Shinozaki K."/>
        </authorList>
    </citation>
    <scope>NUCLEOTIDE SEQUENCE [LARGE SCALE MRNA] OF 9-256</scope>
    <source>
        <strain>cv. Columbia</strain>
        <tissue>Rosette leaf</tissue>
    </source>
</reference>
<reference key="8">
    <citation type="journal article" date="2002" name="Biophys. J.">
        <title>Pigment organization and energy transfer dynamics in isolated photosystem I (PSI) complexes from Arabidopsis thaliana depleted of the PSI-G, PSI-K, PSI-L, or PSI-N subunit.</title>
        <authorList>
            <person name="Ihalainen J.A."/>
            <person name="Jensen P.E."/>
            <person name="Haldrup A."/>
            <person name="van Stokkum I.H.M."/>
            <person name="van Grondelle R."/>
            <person name="Scheller H.V."/>
            <person name="Dekker J.P."/>
        </authorList>
    </citation>
    <scope>REVIEW ON PHOTOSYSTEM I ANTENNA</scope>
</reference>
<reference key="9">
    <citation type="journal article" date="2004" name="Plant Mol. Biol.">
        <title>Lhca5--an LHC-type protein associated with photosystem I.</title>
        <authorList>
            <person name="Ganeteg U."/>
            <person name="Klimmek F."/>
            <person name="Jansson S."/>
        </authorList>
    </citation>
    <scope>FUNCTION</scope>
    <scope>SUBCELLULAR LOCATION</scope>
    <scope>INDUCTION BY LIGHT AND COLD</scope>
    <scope>INTERACTION WITH LHCA2 AND LHCA3</scope>
    <scope>COFACTOR</scope>
    <source>
        <strain>cv. C24</strain>
        <strain>cv. Columbia</strain>
    </source>
</reference>
<reference key="10">
    <citation type="journal article" date="2005" name="J. Biol. Chem.">
        <title>Pigment binding, fluorescence properties, and oligomerization behavior of Lhca5, a novel light-harvesting protein.</title>
        <authorList>
            <person name="Storf S."/>
            <person name="Jansson S."/>
            <person name="Schmid V.H.R."/>
        </authorList>
    </citation>
    <scope>FUNCTION</scope>
    <scope>COFACTOR</scope>
    <scope>SUBUNIT</scope>
    <scope>INTERACTION WITH LHCA1</scope>
    <scope>MISCELLANEOUS</scope>
</reference>
<reference key="11">
    <citation type="journal article" date="2006" name="FEBS Lett.">
        <title>Lhca5 interaction with plant photosystem I.</title>
        <authorList>
            <person name="Lucinski R."/>
            <person name="Schmid V.H."/>
            <person name="Jansson S."/>
            <person name="Klimmek F."/>
        </authorList>
    </citation>
    <scope>INTERACTION WITH LHCA2</scope>
    <scope>HOMODIMER</scope>
    <source>
        <strain>cv. Columbia</strain>
    </source>
</reference>
<reference key="12">
    <citation type="journal article" date="2009" name="J. Biol. Chem.">
        <title>The role of Lhca complexes in the supramolecular organization of higher plant photosystem I.</title>
        <authorList>
            <person name="Wientjes E."/>
            <person name="Oostergetel G.T."/>
            <person name="Jansson S."/>
            <person name="Boekema E.J."/>
            <person name="Croce R."/>
        </authorList>
    </citation>
    <scope>COFACTOR</scope>
    <scope>SUBUNIT</scope>
</reference>
<reference key="13">
    <citation type="journal article" date="2009" name="Plant Cell">
        <title>Efficient operation of NAD(P)H dehydrogenase requires supercomplex formation with photosystem I via minor LHCI in Arabidopsis.</title>
        <authorList>
            <person name="Peng L."/>
            <person name="Fukao Y."/>
            <person name="Fujiwara M."/>
            <person name="Takami T."/>
            <person name="Shikanai T."/>
        </authorList>
    </citation>
    <scope>FUNCTION</scope>
    <scope>DISRUPTION PHENOTYPE</scope>
    <scope>SUBUNIT</scope>
</reference>
<reference key="14">
    <citation type="journal article" date="2011" name="Biophys. J.">
        <title>The role of the individual Lhcas in photosystem I excitation energy trapping.</title>
        <authorList>
            <person name="Wientjes E."/>
            <person name="van Stokkum I.H.M."/>
            <person name="van Amerongen H."/>
            <person name="Croce R."/>
        </authorList>
    </citation>
    <scope>INTERACTION WITH LHCA1</scope>
    <scope>FUNCTION</scope>
</reference>
<reference key="15">
    <citation type="journal article" date="2011" name="Plant Cell Physiol.">
        <title>Structure of the chloroplast NADH dehydrogenase-like complex: nomenclature for nuclear-encoded subunits.</title>
        <authorList>
            <person name="Ifuku K."/>
            <person name="Endo T."/>
            <person name="Shikanai T."/>
            <person name="Aro E.M."/>
        </authorList>
    </citation>
    <scope>REVIEW ON NDH-PSI SUPERCOMPLEX</scope>
</reference>
<reference key="16">
    <citation type="journal article" date="2011" name="Plant Physiol.">
        <title>Supercomplex formation with photosystem I is required for the stabilization of the chloroplast NADH dehydrogenase-like complex in Arabidopsis.</title>
        <authorList>
            <person name="Peng L."/>
            <person name="Shikanai T."/>
        </authorList>
    </citation>
    <scope>FUNCTION</scope>
    <scope>DISRUPTION PHENOTYPE</scope>
</reference>
<reference key="17">
    <citation type="journal article" date="2012" name="Mol. Cell. Proteomics">
        <title>Comparative large-scale characterisation of plant vs. mammal proteins reveals similar and idiosyncratic N-alpha acetylation features.</title>
        <authorList>
            <person name="Bienvenut W.V."/>
            <person name="Sumpton D."/>
            <person name="Martinez A."/>
            <person name="Lilla S."/>
            <person name="Espagne C."/>
            <person name="Meinnel T."/>
            <person name="Giglione C."/>
        </authorList>
    </citation>
    <scope>ACETYLATION [LARGE SCALE ANALYSIS] AT ALA-33</scope>
    <scope>CLEAVAGE OF TRANSIT PEPTIDE [LARGE SCALE ANALYSIS] AFTER LYS-32</scope>
    <scope>IDENTIFICATION BY MASS SPECTROMETRY [LARGE SCALE ANALYSIS]</scope>
</reference>
<comment type="function">
    <text evidence="4 5 8 9 10 13">The light-harvesting complex (LHC) functions as a light receptor, it captures and delivers excitation energy to photosystems with which it is closely associated (PubMed:15563470, PubMed:21806943). Seems involved in the function of the photosystem I in low light conditions, when other LHCA proteins are less abundant (PubMed:15356385). Required, together with LHCA6, for the formation of a full-size NAD(P)H dehydrogenase-photosystem I supercomplex (NDH-PSI) that triggers cyclic and chlororespiratory electron transport in chloroplast thylakoids, especially under stress conditions (e.g. increased light intensity) (Probable) (PubMed:19903870, PubMed:21278308).</text>
</comment>
<comment type="cofactor">
    <text evidence="4 5 7">Binds at least 14 chlorophylls (8 Chl-a and 6 Chl-b) and carotenoids such as lutein and neoxanthin.</text>
</comment>
<comment type="subunit">
    <text evidence="4 5 6 7 8 10">The LHC complex consists of chlorophyll a-b binding proteins (PubMed:19139095). Homodimer. Heterodimer with LHCA2 and, possibly, LHCA3 (PubMed:15356385, PubMed:17107674). Can substitute to LHCA4 to form a complex with LHCA1 (PubMed:15563470, PubMed:21806943). Binds pigments (PubMed:15563470). Element of the NAD(P)H dehydrogenase-photosystem I supercomplex (NDH-PSI) (PubMed:19903870).</text>
</comment>
<comment type="subcellular location">
    <subcellularLocation>
        <location evidence="4">Plastid</location>
        <location evidence="4">Chloroplast thylakoid membrane</location>
        <topology evidence="3">Multi-pass membrane protein</topology>
    </subcellularLocation>
</comment>
<comment type="induction">
    <text evidence="4">Induced by high light (HL) but repressed by low light (LL). Slightly inhibited by cold.</text>
</comment>
<comment type="domain">
    <text evidence="12">The N-terminus of the protein extends into the stroma where it is involved with adhesion of granal membranes and post-translational modifications; both are believed to mediate the distribution of excitation energy between photosystems I and II.</text>
</comment>
<comment type="PTM">
    <text evidence="2">Photoregulated by reversible phosphorylation of its threonine residues.</text>
</comment>
<comment type="disruption phenotype">
    <text evidence="8 9">Slightly lower NDH activity in immature leaves. Smaller version of the NAD(P)H dehydrogenase-photosystem I supercomplex (NDH-PSI) supercomplex (PubMed:19903870). In the double mutant lhca5 lhca6, drastic reduction of NDH subunits accumulation upon increased light intensity (PubMed:21278308).</text>
</comment>
<comment type="miscellaneous">
    <text evidence="5">Light emission at 684 nm upon excitation at 410 and 470 nm.</text>
</comment>
<comment type="similarity">
    <text evidence="12">Belongs to the light-harvesting chlorophyll a/b-binding (LHC) protein family.</text>
</comment>
<proteinExistence type="evidence at protein level"/>
<feature type="transit peptide" description="Chloroplast" evidence="16">
    <location>
        <begin position="1"/>
        <end position="32"/>
    </location>
</feature>
<feature type="chain" id="PRO_0000435449" description="Photosystem I chlorophyll a/b-binding protein 5, chloroplastic">
    <location>
        <begin position="33"/>
        <end position="256"/>
    </location>
</feature>
<feature type="transmembrane region" description="Helical" evidence="3">
    <location>
        <begin position="94"/>
        <end position="113"/>
    </location>
</feature>
<feature type="transmembrane region" description="Helical" evidence="3">
    <location>
        <begin position="129"/>
        <end position="146"/>
    </location>
</feature>
<feature type="transmembrane region" description="Helical" evidence="3">
    <location>
        <begin position="212"/>
        <end position="232"/>
    </location>
</feature>
<feature type="binding site" description="axial binding residue" evidence="2">
    <location>
        <position position="49"/>
    </location>
    <ligand>
        <name>chlorophyll b</name>
        <dbReference type="ChEBI" id="CHEBI:61721"/>
        <label>1</label>
    </ligand>
    <ligandPart>
        <name>Mg</name>
        <dbReference type="ChEBI" id="CHEBI:25107"/>
    </ligandPart>
</feature>
<feature type="binding site" evidence="1">
    <location>
        <position position="69"/>
    </location>
    <ligand>
        <name>chlorophyll a</name>
        <dbReference type="ChEBI" id="CHEBI:58416"/>
        <label>1</label>
    </ligand>
</feature>
<feature type="binding site" description="axial binding residue" evidence="2">
    <location>
        <position position="88"/>
    </location>
    <ligand>
        <name>chlorophyll a</name>
        <dbReference type="ChEBI" id="CHEBI:58416"/>
        <label>1</label>
    </ligand>
    <ligandPart>
        <name>Mg</name>
        <dbReference type="ChEBI" id="CHEBI:25107"/>
    </ligandPart>
</feature>
<feature type="binding site" evidence="1">
    <location>
        <position position="93"/>
    </location>
    <ligand>
        <name>chlorophyll b</name>
        <dbReference type="ChEBI" id="CHEBI:61721"/>
        <label>2</label>
    </ligand>
</feature>
<feature type="binding site" description="axial binding residue" evidence="2">
    <location>
        <position position="147"/>
    </location>
    <ligand>
        <name>chlorophyll b</name>
        <dbReference type="ChEBI" id="CHEBI:61721"/>
        <label>3</label>
    </ligand>
    <ligandPart>
        <name>Mg</name>
        <dbReference type="ChEBI" id="CHEBI:25107"/>
    </ligandPart>
</feature>
<feature type="binding site" evidence="1">
    <location>
        <position position="150"/>
    </location>
    <ligand>
        <name>chlorophyll b</name>
        <dbReference type="ChEBI" id="CHEBI:61721"/>
        <label>4</label>
    </ligand>
</feature>
<feature type="binding site" evidence="1">
    <location>
        <position position="205"/>
    </location>
    <ligand>
        <name>chlorophyll a</name>
        <dbReference type="ChEBI" id="CHEBI:58416"/>
        <label>5</label>
    </ligand>
</feature>
<feature type="binding site" description="axial binding residue" evidence="2">
    <location>
        <position position="206"/>
    </location>
    <ligand>
        <name>chlorophyll a</name>
        <dbReference type="ChEBI" id="CHEBI:58416"/>
        <label>3</label>
    </ligand>
    <ligandPart>
        <name>Mg</name>
        <dbReference type="ChEBI" id="CHEBI:25107"/>
    </ligandPart>
</feature>
<feature type="binding site" description="axial binding residue" evidence="2">
    <location>
        <position position="209"/>
    </location>
    <ligand>
        <name>chlorophyll a</name>
        <dbReference type="ChEBI" id="CHEBI:58416"/>
        <label>4</label>
    </ligand>
    <ligandPart>
        <name>Mg</name>
        <dbReference type="ChEBI" id="CHEBI:25107"/>
    </ligandPart>
</feature>
<feature type="binding site" evidence="1">
    <location>
        <position position="211"/>
    </location>
    <ligand>
        <name>chlorophyll a</name>
        <dbReference type="ChEBI" id="CHEBI:58416"/>
        <label>1</label>
    </ligand>
</feature>
<feature type="binding site" description="axial binding residue" evidence="2">
    <location>
        <position position="223"/>
    </location>
    <ligand>
        <name>chlorophyll a</name>
        <dbReference type="ChEBI" id="CHEBI:58416"/>
        <label>5</label>
    </ligand>
    <ligandPart>
        <name>Mg</name>
        <dbReference type="ChEBI" id="CHEBI:25107"/>
    </ligandPart>
</feature>
<feature type="binding site" description="axial binding residue" evidence="2">
    <location>
        <position position="238"/>
    </location>
    <ligand>
        <name>chlorophyll a</name>
        <dbReference type="ChEBI" id="CHEBI:58416"/>
        <label>6</label>
    </ligand>
    <ligandPart>
        <name>Mg</name>
        <dbReference type="ChEBI" id="CHEBI:25107"/>
    </ligandPart>
</feature>
<feature type="modified residue" description="N-acetylalanine" evidence="16">
    <location>
        <position position="33"/>
    </location>
</feature>
<feature type="sequence conflict" description="In Ref. 1; AAD28768." evidence="12" ref="1">
    <original>S</original>
    <variation>C</variation>
    <location>
        <position position="131"/>
    </location>
</feature>
<feature type="sequence conflict" description="In Ref. 6; AAM65689." evidence="12" ref="6">
    <original>L</original>
    <variation>I</variation>
    <location>
        <position position="170"/>
    </location>
</feature>
<feature type="sequence conflict" description="In Ref. 6; AAM65689." evidence="12" ref="6">
    <original>Q</original>
    <variation>K</variation>
    <location>
        <position position="197"/>
    </location>
</feature>
<accession>Q9C639</accession>
<accession>B9DFW4</accession>
<accession>Q8L9Y7</accession>
<accession>Q9XF85</accession>
<gene>
    <name evidence="11" type="primary">LHCA5</name>
    <name evidence="14" type="ordered locus">At1g45474</name>
    <name evidence="15" type="ORF">F2G19.4</name>
</gene>
<dbReference type="EMBL" id="AF134121">
    <property type="protein sequence ID" value="AAD28768.1"/>
    <property type="molecule type" value="mRNA"/>
</dbReference>
<dbReference type="EMBL" id="AC083835">
    <property type="protein sequence ID" value="AAG50618.1"/>
    <property type="molecule type" value="Genomic_DNA"/>
</dbReference>
<dbReference type="EMBL" id="CP002684">
    <property type="protein sequence ID" value="AEE32117.1"/>
    <property type="molecule type" value="Genomic_DNA"/>
</dbReference>
<dbReference type="EMBL" id="CP002684">
    <property type="protein sequence ID" value="AEE32118.1"/>
    <property type="molecule type" value="Genomic_DNA"/>
</dbReference>
<dbReference type="EMBL" id="AY062097">
    <property type="protein sequence ID" value="AAL32974.1"/>
    <property type="molecule type" value="mRNA"/>
</dbReference>
<dbReference type="EMBL" id="AY090263">
    <property type="protein sequence ID" value="AAL90924.1"/>
    <property type="molecule type" value="mRNA"/>
</dbReference>
<dbReference type="EMBL" id="AK221694">
    <property type="protein sequence ID" value="BAD95402.1"/>
    <property type="molecule type" value="mRNA"/>
</dbReference>
<dbReference type="EMBL" id="AY088144">
    <property type="protein sequence ID" value="AAM65689.1"/>
    <property type="molecule type" value="mRNA"/>
</dbReference>
<dbReference type="EMBL" id="AK316926">
    <property type="protein sequence ID" value="BAH19631.1"/>
    <property type="molecule type" value="mRNA"/>
</dbReference>
<dbReference type="PIR" id="F96510">
    <property type="entry name" value="F96510"/>
</dbReference>
<dbReference type="PIR" id="T52328">
    <property type="entry name" value="T52328"/>
</dbReference>
<dbReference type="RefSeq" id="NP_175137.1">
    <property type="nucleotide sequence ID" value="NM_103597.5"/>
</dbReference>
<dbReference type="RefSeq" id="NP_849778.1">
    <property type="nucleotide sequence ID" value="NM_179447.2"/>
</dbReference>
<dbReference type="PDB" id="7WFE">
    <property type="method" value="EM"/>
    <property type="resolution" value="3.25 A"/>
    <property type="chains" value="B5=1-256"/>
</dbReference>
<dbReference type="PDB" id="7WG5">
    <property type="method" value="EM"/>
    <property type="resolution" value="3.89 A"/>
    <property type="chains" value="B5=1-256"/>
</dbReference>
<dbReference type="PDBsum" id="7WFE"/>
<dbReference type="PDBsum" id="7WG5"/>
<dbReference type="EMDB" id="EMD-32463"/>
<dbReference type="EMDB" id="EMD-32477"/>
<dbReference type="SMR" id="Q9C639"/>
<dbReference type="FunCoup" id="Q9C639">
    <property type="interactions" value="1194"/>
</dbReference>
<dbReference type="STRING" id="3702.Q9C639"/>
<dbReference type="GlyGen" id="Q9C639">
    <property type="glycosylation" value="1 site"/>
</dbReference>
<dbReference type="iPTMnet" id="Q9C639"/>
<dbReference type="PaxDb" id="3702-AT1G45474.2"/>
<dbReference type="ProteomicsDB" id="238447"/>
<dbReference type="EnsemblPlants" id="AT1G45474.1">
    <property type="protein sequence ID" value="AT1G45474.1"/>
    <property type="gene ID" value="AT1G45474"/>
</dbReference>
<dbReference type="EnsemblPlants" id="AT1G45474.2">
    <property type="protein sequence ID" value="AT1G45474.2"/>
    <property type="gene ID" value="AT1G45474"/>
</dbReference>
<dbReference type="GeneID" id="841099"/>
<dbReference type="Gramene" id="AT1G45474.1">
    <property type="protein sequence ID" value="AT1G45474.1"/>
    <property type="gene ID" value="AT1G45474"/>
</dbReference>
<dbReference type="Gramene" id="AT1G45474.2">
    <property type="protein sequence ID" value="AT1G45474.2"/>
    <property type="gene ID" value="AT1G45474"/>
</dbReference>
<dbReference type="KEGG" id="ath:AT1G45474"/>
<dbReference type="Araport" id="AT1G45474"/>
<dbReference type="TAIR" id="AT1G45474">
    <property type="gene designation" value="LHCA5"/>
</dbReference>
<dbReference type="eggNOG" id="ENOG502S212">
    <property type="taxonomic scope" value="Eukaryota"/>
</dbReference>
<dbReference type="HOGENOM" id="CLU_057943_6_1_1"/>
<dbReference type="InParanoid" id="Q9C639"/>
<dbReference type="OMA" id="ELMNARW"/>
<dbReference type="PhylomeDB" id="Q9C639"/>
<dbReference type="PRO" id="PR:Q9C639"/>
<dbReference type="Proteomes" id="UP000006548">
    <property type="component" value="Chromosome 1"/>
</dbReference>
<dbReference type="ExpressionAtlas" id="Q9C639">
    <property type="expression patterns" value="baseline and differential"/>
</dbReference>
<dbReference type="GO" id="GO:0009507">
    <property type="term" value="C:chloroplast"/>
    <property type="evidence" value="ECO:0007005"/>
    <property type="project" value="TAIR"/>
</dbReference>
<dbReference type="GO" id="GO:0009535">
    <property type="term" value="C:chloroplast thylakoid membrane"/>
    <property type="evidence" value="ECO:0000314"/>
    <property type="project" value="UniProtKB"/>
</dbReference>
<dbReference type="GO" id="GO:0009782">
    <property type="term" value="C:photosystem I antenna complex"/>
    <property type="evidence" value="ECO:0000314"/>
    <property type="project" value="TAIR"/>
</dbReference>
<dbReference type="GO" id="GO:0016168">
    <property type="term" value="F:chlorophyll binding"/>
    <property type="evidence" value="ECO:0007669"/>
    <property type="project" value="UniProtKB-KW"/>
</dbReference>
<dbReference type="GO" id="GO:0046872">
    <property type="term" value="F:metal ion binding"/>
    <property type="evidence" value="ECO:0007669"/>
    <property type="project" value="UniProtKB-KW"/>
</dbReference>
<dbReference type="GO" id="GO:0031409">
    <property type="term" value="F:pigment binding"/>
    <property type="evidence" value="ECO:0000314"/>
    <property type="project" value="TAIR"/>
</dbReference>
<dbReference type="GO" id="GO:0042803">
    <property type="term" value="F:protein homodimerization activity"/>
    <property type="evidence" value="ECO:0000314"/>
    <property type="project" value="UniProtKB"/>
</dbReference>
<dbReference type="GO" id="GO:0009768">
    <property type="term" value="P:photosynthesis, light harvesting in photosystem I"/>
    <property type="evidence" value="ECO:0000314"/>
    <property type="project" value="UniProtKB"/>
</dbReference>
<dbReference type="GO" id="GO:0009409">
    <property type="term" value="P:response to cold"/>
    <property type="evidence" value="ECO:0000270"/>
    <property type="project" value="UniProtKB"/>
</dbReference>
<dbReference type="GO" id="GO:0009644">
    <property type="term" value="P:response to high light intensity"/>
    <property type="evidence" value="ECO:0000270"/>
    <property type="project" value="UniProtKB"/>
</dbReference>
<dbReference type="GO" id="GO:0009645">
    <property type="term" value="P:response to low light intensity stimulus"/>
    <property type="evidence" value="ECO:0000270"/>
    <property type="project" value="UniProtKB"/>
</dbReference>
<dbReference type="FunFam" id="1.10.3460.10:FF:000010">
    <property type="entry name" value="Chlorophyll a-b binding protein, chloroplastic"/>
    <property type="match status" value="1"/>
</dbReference>
<dbReference type="Gene3D" id="1.10.3460.10">
    <property type="entry name" value="Chlorophyll a/b binding protein domain"/>
    <property type="match status" value="1"/>
</dbReference>
<dbReference type="InterPro" id="IPR001344">
    <property type="entry name" value="Chloro_AB-bd_pln"/>
</dbReference>
<dbReference type="InterPro" id="IPR022796">
    <property type="entry name" value="Chloroa_b-bind"/>
</dbReference>
<dbReference type="PANTHER" id="PTHR21649">
    <property type="entry name" value="CHLOROPHYLL A/B BINDING PROTEIN"/>
    <property type="match status" value="1"/>
</dbReference>
<dbReference type="Pfam" id="PF00504">
    <property type="entry name" value="Chloroa_b-bind"/>
    <property type="match status" value="1"/>
</dbReference>
<dbReference type="SUPFAM" id="SSF103511">
    <property type="entry name" value="Chlorophyll a-b binding protein"/>
    <property type="match status" value="1"/>
</dbReference>
<protein>
    <recommendedName>
        <fullName evidence="11">Photosystem I chlorophyll a/b-binding protein 5, chloroplastic</fullName>
        <shortName evidence="11">Lhca5</shortName>
    </recommendedName>
    <alternativeName>
        <fullName evidence="12">LHCI type III LHCA5</fullName>
    </alternativeName>
</protein>
<name>LHCA5_ARATH</name>
<sequence>MAVVLRGGITGGFLHHRRDASSVITRRISSVKAAGGGINPTVAVERATWLPGLNPPPYLDGNLAGDYGFDPLGLGEDPESLKWYVQAELVHSRFAMLGVAGILFTDLLRTTGIRNLPVWYEAGAVKFDFASTKTLIVVQFLLMGFAETKRYMDFVSPGSQAKEGSFFFGLEAALEGLEPGYPGGPLLNPLGLAKDVQNAHDWKLKEIKNGRLAMMAMLGFFVQASVTHTGPIDNLVEHLSNPWHKTIIQTLFTSTS</sequence>
<evidence type="ECO:0000250" key="1">
    <source>
        <dbReference type="UniProtKB" id="P07371"/>
    </source>
</evidence>
<evidence type="ECO:0000250" key="2">
    <source>
        <dbReference type="UniProtKB" id="P12333"/>
    </source>
</evidence>
<evidence type="ECO:0000255" key="3"/>
<evidence type="ECO:0000269" key="4">
    <source>
    </source>
</evidence>
<evidence type="ECO:0000269" key="5">
    <source>
    </source>
</evidence>
<evidence type="ECO:0000269" key="6">
    <source>
    </source>
</evidence>
<evidence type="ECO:0000269" key="7">
    <source>
    </source>
</evidence>
<evidence type="ECO:0000269" key="8">
    <source>
    </source>
</evidence>
<evidence type="ECO:0000269" key="9">
    <source>
    </source>
</evidence>
<evidence type="ECO:0000269" key="10">
    <source>
    </source>
</evidence>
<evidence type="ECO:0000303" key="11">
    <source>
    </source>
</evidence>
<evidence type="ECO:0000305" key="12"/>
<evidence type="ECO:0000305" key="13">
    <source>
    </source>
</evidence>
<evidence type="ECO:0000312" key="14">
    <source>
        <dbReference type="Araport" id="AT1G45474"/>
    </source>
</evidence>
<evidence type="ECO:0000312" key="15">
    <source>
        <dbReference type="EMBL" id="AAG50618.1"/>
    </source>
</evidence>
<evidence type="ECO:0007744" key="16">
    <source>
    </source>
</evidence>
<keyword id="KW-0002">3D-structure</keyword>
<keyword id="KW-0007">Acetylation</keyword>
<keyword id="KW-0148">Chlorophyll</keyword>
<keyword id="KW-0150">Chloroplast</keyword>
<keyword id="KW-0157">Chromophore</keyword>
<keyword id="KW-0460">Magnesium</keyword>
<keyword id="KW-0472">Membrane</keyword>
<keyword id="KW-0479">Metal-binding</keyword>
<keyword id="KW-0602">Photosynthesis</keyword>
<keyword id="KW-0603">Photosystem I</keyword>
<keyword id="KW-0934">Plastid</keyword>
<keyword id="KW-1185">Reference proteome</keyword>
<keyword id="KW-0793">Thylakoid</keyword>
<keyword id="KW-0809">Transit peptide</keyword>
<keyword id="KW-0812">Transmembrane</keyword>
<keyword id="KW-1133">Transmembrane helix</keyword>
<organism>
    <name type="scientific">Arabidopsis thaliana</name>
    <name type="common">Mouse-ear cress</name>
    <dbReference type="NCBI Taxonomy" id="3702"/>
    <lineage>
        <taxon>Eukaryota</taxon>
        <taxon>Viridiplantae</taxon>
        <taxon>Streptophyta</taxon>
        <taxon>Embryophyta</taxon>
        <taxon>Tracheophyta</taxon>
        <taxon>Spermatophyta</taxon>
        <taxon>Magnoliopsida</taxon>
        <taxon>eudicotyledons</taxon>
        <taxon>Gunneridae</taxon>
        <taxon>Pentapetalae</taxon>
        <taxon>rosids</taxon>
        <taxon>malvids</taxon>
        <taxon>Brassicales</taxon>
        <taxon>Brassicaceae</taxon>
        <taxon>Camelineae</taxon>
        <taxon>Arabidopsis</taxon>
    </lineage>
</organism>